<comment type="subunit">
    <text evidence="1">Homodimer.</text>
</comment>
<comment type="similarity">
    <text evidence="2">Belongs to the universal stress protein A family.</text>
</comment>
<comment type="sequence caution" evidence="2">
    <conflict type="erroneous initiation">
        <sequence resource="EMBL-CDS" id="CAD42730"/>
    </conflict>
</comment>
<gene>
    <name type="primary">uspF</name>
    <name type="ordered locus">ECP_1401</name>
</gene>
<reference key="1">
    <citation type="journal article" date="2003" name="J. Bacteriol.">
        <title>Analysis of genome plasticity in pathogenic and commensal Escherichia coli isolates by use of DNA arrays.</title>
        <authorList>
            <person name="Dobrindt U."/>
            <person name="Agerer F."/>
            <person name="Michaelis K."/>
            <person name="Janka A."/>
            <person name="Buchrieser C."/>
            <person name="Samuelson M."/>
            <person name="Svanborg C."/>
            <person name="Gottschalk G."/>
            <person name="Karch H."/>
            <person name="Hacker J."/>
        </authorList>
    </citation>
    <scope>NUCLEOTIDE SEQUENCE [GENOMIC DNA]</scope>
</reference>
<reference key="2">
    <citation type="journal article" date="2006" name="Mol. Microbiol.">
        <title>Role of pathogenicity island-associated integrases in the genome plasticity of uropathogenic Escherichia coli strain 536.</title>
        <authorList>
            <person name="Hochhut B."/>
            <person name="Wilde C."/>
            <person name="Balling G."/>
            <person name="Middendorf B."/>
            <person name="Dobrindt U."/>
            <person name="Brzuszkiewicz E."/>
            <person name="Gottschalk G."/>
            <person name="Carniel E."/>
            <person name="Hacker J."/>
        </authorList>
    </citation>
    <scope>NUCLEOTIDE SEQUENCE [LARGE SCALE GENOMIC DNA]</scope>
    <source>
        <strain>536 / UPEC</strain>
    </source>
</reference>
<proteinExistence type="inferred from homology"/>
<protein>
    <recommendedName>
        <fullName>Universal stress protein F</fullName>
    </recommendedName>
</protein>
<evidence type="ECO:0000250" key="1"/>
<evidence type="ECO:0000305" key="2"/>
<accession>Q0TI19</accession>
<sequence length="144" mass="15958">MNRTILVPIDISDSELTQRVISHVEAEAKIDDAEVHFLTVIPSLPYYASLGLAYSAELPAMDDLKAEAKSQLEEIIKKFKLPTDRVHVHVEEGSPKDRILELAKKIPAHMIIIASHRPDITTYLLGSNAAAVVRHAECSVLVVR</sequence>
<dbReference type="EMBL" id="AJ496193">
    <property type="protein sequence ID" value="CAD42730.1"/>
    <property type="status" value="ALT_INIT"/>
    <property type="molecule type" value="Genomic_DNA"/>
</dbReference>
<dbReference type="EMBL" id="CP000247">
    <property type="protein sequence ID" value="ABG69410.1"/>
    <property type="molecule type" value="Genomic_DNA"/>
</dbReference>
<dbReference type="RefSeq" id="WP_001295593.1">
    <property type="nucleotide sequence ID" value="NC_008253.1"/>
</dbReference>
<dbReference type="SMR" id="Q0TI19"/>
<dbReference type="GeneID" id="93775539"/>
<dbReference type="KEGG" id="ecp:ECP_1401"/>
<dbReference type="HOGENOM" id="CLU_049301_12_0_6"/>
<dbReference type="Proteomes" id="UP000009182">
    <property type="component" value="Chromosome"/>
</dbReference>
<dbReference type="CDD" id="cd00293">
    <property type="entry name" value="USP-like"/>
    <property type="match status" value="1"/>
</dbReference>
<dbReference type="FunFam" id="3.40.50.620:FF:000059">
    <property type="entry name" value="Universal stress protein F"/>
    <property type="match status" value="1"/>
</dbReference>
<dbReference type="Gene3D" id="3.40.50.620">
    <property type="entry name" value="HUPs"/>
    <property type="match status" value="1"/>
</dbReference>
<dbReference type="InterPro" id="IPR014729">
    <property type="entry name" value="Rossmann-like_a/b/a_fold"/>
</dbReference>
<dbReference type="InterPro" id="IPR006015">
    <property type="entry name" value="Universal_stress_UspA"/>
</dbReference>
<dbReference type="InterPro" id="IPR006016">
    <property type="entry name" value="UspA"/>
</dbReference>
<dbReference type="NCBIfam" id="NF011581">
    <property type="entry name" value="PRK15005.1"/>
    <property type="match status" value="1"/>
</dbReference>
<dbReference type="PANTHER" id="PTHR46268">
    <property type="entry name" value="STRESS RESPONSE PROTEIN NHAX"/>
    <property type="match status" value="1"/>
</dbReference>
<dbReference type="PANTHER" id="PTHR46268:SF18">
    <property type="entry name" value="UNIVERSAL STRESS PROTEIN F"/>
    <property type="match status" value="1"/>
</dbReference>
<dbReference type="Pfam" id="PF00582">
    <property type="entry name" value="Usp"/>
    <property type="match status" value="1"/>
</dbReference>
<dbReference type="PRINTS" id="PR01438">
    <property type="entry name" value="UNVRSLSTRESS"/>
</dbReference>
<dbReference type="SUPFAM" id="SSF52402">
    <property type="entry name" value="Adenine nucleotide alpha hydrolases-like"/>
    <property type="match status" value="1"/>
</dbReference>
<name>USPF_ECOL5</name>
<organism>
    <name type="scientific">Escherichia coli O6:K15:H31 (strain 536 / UPEC)</name>
    <dbReference type="NCBI Taxonomy" id="362663"/>
    <lineage>
        <taxon>Bacteria</taxon>
        <taxon>Pseudomonadati</taxon>
        <taxon>Pseudomonadota</taxon>
        <taxon>Gammaproteobacteria</taxon>
        <taxon>Enterobacterales</taxon>
        <taxon>Enterobacteriaceae</taxon>
        <taxon>Escherichia</taxon>
    </lineage>
</organism>
<feature type="chain" id="PRO_0000253342" description="Universal stress protein F">
    <location>
        <begin position="1"/>
        <end position="144"/>
    </location>
</feature>